<protein>
    <recommendedName>
        <fullName evidence="1">Phosphoheptose isomerase</fullName>
        <ecNumber evidence="1">5.3.1.28</ecNumber>
    </recommendedName>
    <alternativeName>
        <fullName evidence="1">Sedoheptulose 7-phosphate isomerase</fullName>
    </alternativeName>
</protein>
<reference key="1">
    <citation type="submission" date="2008-06" db="EMBL/GenBank/DDBJ databases">
        <title>Genome and proteome analysis of A. pleuropneumoniae serotype 7.</title>
        <authorList>
            <person name="Linke B."/>
            <person name="Buettner F."/>
            <person name="Martinez-Arias R."/>
            <person name="Goesmann A."/>
            <person name="Baltes N."/>
            <person name="Tegetmeyer H."/>
            <person name="Singh M."/>
            <person name="Gerlach G.F."/>
        </authorList>
    </citation>
    <scope>NUCLEOTIDE SEQUENCE [LARGE SCALE GENOMIC DNA]</scope>
    <source>
        <strain>AP76</strain>
    </source>
</reference>
<accession>B3H1D8</accession>
<name>GMHA_ACTP7</name>
<proteinExistence type="inferred from homology"/>
<evidence type="ECO:0000255" key="1">
    <source>
        <dbReference type="HAMAP-Rule" id="MF_00067"/>
    </source>
</evidence>
<comment type="function">
    <text evidence="1">Catalyzes the isomerization of sedoheptulose 7-phosphate in D-glycero-D-manno-heptose 7-phosphate.</text>
</comment>
<comment type="catalytic activity">
    <reaction evidence="1">
        <text>2 D-sedoheptulose 7-phosphate = D-glycero-alpha-D-manno-heptose 7-phosphate + D-glycero-beta-D-manno-heptose 7-phosphate</text>
        <dbReference type="Rhea" id="RHEA:27489"/>
        <dbReference type="ChEBI" id="CHEBI:57483"/>
        <dbReference type="ChEBI" id="CHEBI:60203"/>
        <dbReference type="ChEBI" id="CHEBI:60204"/>
        <dbReference type="EC" id="5.3.1.28"/>
    </reaction>
</comment>
<comment type="cofactor">
    <cofactor evidence="1">
        <name>Zn(2+)</name>
        <dbReference type="ChEBI" id="CHEBI:29105"/>
    </cofactor>
    <text evidence="1">Binds 1 zinc ion per subunit.</text>
</comment>
<comment type="pathway">
    <text evidence="1">Carbohydrate biosynthesis; D-glycero-D-manno-heptose 7-phosphate biosynthesis; D-glycero-alpha-D-manno-heptose 7-phosphate and D-glycero-beta-D-manno-heptose 7-phosphate from sedoheptulose 7-phosphate: step 1/1.</text>
</comment>
<comment type="subunit">
    <text evidence="1">Homotetramer.</text>
</comment>
<comment type="subcellular location">
    <subcellularLocation>
        <location evidence="1">Cytoplasm</location>
    </subcellularLocation>
</comment>
<comment type="miscellaneous">
    <text evidence="1">The reaction produces a racemic mixture of D-glycero-alpha-D-manno-heptose 7-phosphate and D-glycero-beta-D-manno-heptose 7-phosphate.</text>
</comment>
<comment type="similarity">
    <text evidence="1">Belongs to the SIS family. GmhA subfamily.</text>
</comment>
<dbReference type="EC" id="5.3.1.28" evidence="1"/>
<dbReference type="EMBL" id="CP001091">
    <property type="protein sequence ID" value="ACE61510.1"/>
    <property type="molecule type" value="Genomic_DNA"/>
</dbReference>
<dbReference type="SMR" id="B3H1D8"/>
<dbReference type="KEGG" id="apa:APP7_0858"/>
<dbReference type="HOGENOM" id="CLU_080999_4_0_6"/>
<dbReference type="UniPathway" id="UPA00041">
    <property type="reaction ID" value="UER00436"/>
</dbReference>
<dbReference type="Proteomes" id="UP000001226">
    <property type="component" value="Chromosome"/>
</dbReference>
<dbReference type="GO" id="GO:0005737">
    <property type="term" value="C:cytoplasm"/>
    <property type="evidence" value="ECO:0007669"/>
    <property type="project" value="UniProtKB-SubCell"/>
</dbReference>
<dbReference type="GO" id="GO:0097367">
    <property type="term" value="F:carbohydrate derivative binding"/>
    <property type="evidence" value="ECO:0007669"/>
    <property type="project" value="InterPro"/>
</dbReference>
<dbReference type="GO" id="GO:0008968">
    <property type="term" value="F:D-sedoheptulose 7-phosphate isomerase activity"/>
    <property type="evidence" value="ECO:0007669"/>
    <property type="project" value="UniProtKB-UniRule"/>
</dbReference>
<dbReference type="GO" id="GO:0008270">
    <property type="term" value="F:zinc ion binding"/>
    <property type="evidence" value="ECO:0007669"/>
    <property type="project" value="UniProtKB-UniRule"/>
</dbReference>
<dbReference type="GO" id="GO:0005975">
    <property type="term" value="P:carbohydrate metabolic process"/>
    <property type="evidence" value="ECO:0007669"/>
    <property type="project" value="UniProtKB-UniRule"/>
</dbReference>
<dbReference type="GO" id="GO:2001061">
    <property type="term" value="P:D-glycero-D-manno-heptose 7-phosphate biosynthetic process"/>
    <property type="evidence" value="ECO:0007669"/>
    <property type="project" value="UniProtKB-UniPathway"/>
</dbReference>
<dbReference type="CDD" id="cd05006">
    <property type="entry name" value="SIS_GmhA"/>
    <property type="match status" value="1"/>
</dbReference>
<dbReference type="Gene3D" id="3.40.50.10490">
    <property type="entry name" value="Glucose-6-phosphate isomerase like protein, domain 1"/>
    <property type="match status" value="1"/>
</dbReference>
<dbReference type="HAMAP" id="MF_00067">
    <property type="entry name" value="GmhA"/>
    <property type="match status" value="1"/>
</dbReference>
<dbReference type="InterPro" id="IPR035461">
    <property type="entry name" value="GmhA/DiaA"/>
</dbReference>
<dbReference type="InterPro" id="IPR004515">
    <property type="entry name" value="Phosphoheptose_Isoase"/>
</dbReference>
<dbReference type="InterPro" id="IPR001347">
    <property type="entry name" value="SIS_dom"/>
</dbReference>
<dbReference type="InterPro" id="IPR046348">
    <property type="entry name" value="SIS_dom_sf"/>
</dbReference>
<dbReference type="InterPro" id="IPR050099">
    <property type="entry name" value="SIS_GmhA/DiaA_subfam"/>
</dbReference>
<dbReference type="NCBIfam" id="TIGR00441">
    <property type="entry name" value="gmhA"/>
    <property type="match status" value="1"/>
</dbReference>
<dbReference type="NCBIfam" id="NF001628">
    <property type="entry name" value="PRK00414.1"/>
    <property type="match status" value="1"/>
</dbReference>
<dbReference type="PANTHER" id="PTHR30390:SF7">
    <property type="entry name" value="PHOSPHOHEPTOSE ISOMERASE"/>
    <property type="match status" value="1"/>
</dbReference>
<dbReference type="PANTHER" id="PTHR30390">
    <property type="entry name" value="SEDOHEPTULOSE 7-PHOSPHATE ISOMERASE / DNAA INITIATOR-ASSOCIATING FACTOR FOR REPLICATION INITIATION"/>
    <property type="match status" value="1"/>
</dbReference>
<dbReference type="Pfam" id="PF13580">
    <property type="entry name" value="SIS_2"/>
    <property type="match status" value="1"/>
</dbReference>
<dbReference type="SUPFAM" id="SSF53697">
    <property type="entry name" value="SIS domain"/>
    <property type="match status" value="1"/>
</dbReference>
<dbReference type="PROSITE" id="PS51464">
    <property type="entry name" value="SIS"/>
    <property type="match status" value="1"/>
</dbReference>
<sequence>MYLAQIKAELQEAADVLDKFMSDEKNIQLIQDAALLISNSFKQGGKVLSCGNGGSHCDAMHFAEELTGRYRENRPGYPAIAISDVSHLSCVSNDFGYEYVFSRYLEAVGQKGDVLFGLSTSGNSKNVLNAIKVAKEKGMKVIAMTGKDGGQMAGLADVEIRVPHFRYADRTQEIHIKVIHILMMLIEFEMAKQA</sequence>
<gene>
    <name evidence="1" type="primary">gmhA</name>
    <name type="ordered locus">APP7_0858</name>
</gene>
<keyword id="KW-0119">Carbohydrate metabolism</keyword>
<keyword id="KW-0963">Cytoplasm</keyword>
<keyword id="KW-0413">Isomerase</keyword>
<keyword id="KW-0479">Metal-binding</keyword>
<keyword id="KW-0862">Zinc</keyword>
<feature type="chain" id="PRO_1000092262" description="Phosphoheptose isomerase">
    <location>
        <begin position="1"/>
        <end position="194"/>
    </location>
</feature>
<feature type="domain" description="SIS" evidence="1">
    <location>
        <begin position="37"/>
        <end position="194"/>
    </location>
</feature>
<feature type="binding site" evidence="1">
    <location>
        <begin position="52"/>
        <end position="54"/>
    </location>
    <ligand>
        <name>substrate</name>
    </ligand>
</feature>
<feature type="binding site" evidence="1">
    <location>
        <position position="61"/>
    </location>
    <ligand>
        <name>Zn(2+)</name>
        <dbReference type="ChEBI" id="CHEBI:29105"/>
    </ligand>
</feature>
<feature type="binding site" evidence="1">
    <location>
        <position position="65"/>
    </location>
    <ligand>
        <name>substrate</name>
    </ligand>
</feature>
<feature type="binding site" evidence="1">
    <location>
        <position position="65"/>
    </location>
    <ligand>
        <name>Zn(2+)</name>
        <dbReference type="ChEBI" id="CHEBI:29105"/>
    </ligand>
</feature>
<feature type="binding site" evidence="1">
    <location>
        <begin position="93"/>
        <end position="94"/>
    </location>
    <ligand>
        <name>substrate</name>
    </ligand>
</feature>
<feature type="binding site" evidence="1">
    <location>
        <begin position="119"/>
        <end position="121"/>
    </location>
    <ligand>
        <name>substrate</name>
    </ligand>
</feature>
<feature type="binding site" evidence="1">
    <location>
        <position position="124"/>
    </location>
    <ligand>
        <name>substrate</name>
    </ligand>
</feature>
<feature type="binding site" evidence="1">
    <location>
        <position position="172"/>
    </location>
    <ligand>
        <name>substrate</name>
    </ligand>
</feature>
<feature type="binding site" evidence="1">
    <location>
        <position position="172"/>
    </location>
    <ligand>
        <name>Zn(2+)</name>
        <dbReference type="ChEBI" id="CHEBI:29105"/>
    </ligand>
</feature>
<feature type="binding site" evidence="1">
    <location>
        <position position="180"/>
    </location>
    <ligand>
        <name>Zn(2+)</name>
        <dbReference type="ChEBI" id="CHEBI:29105"/>
    </ligand>
</feature>
<organism>
    <name type="scientific">Actinobacillus pleuropneumoniae serotype 7 (strain AP76)</name>
    <dbReference type="NCBI Taxonomy" id="537457"/>
    <lineage>
        <taxon>Bacteria</taxon>
        <taxon>Pseudomonadati</taxon>
        <taxon>Pseudomonadota</taxon>
        <taxon>Gammaproteobacteria</taxon>
        <taxon>Pasteurellales</taxon>
        <taxon>Pasteurellaceae</taxon>
        <taxon>Actinobacillus</taxon>
    </lineage>
</organism>